<name>RL16_LIMRD</name>
<evidence type="ECO:0000255" key="1">
    <source>
        <dbReference type="HAMAP-Rule" id="MF_01342"/>
    </source>
</evidence>
<evidence type="ECO:0000256" key="2">
    <source>
        <dbReference type="SAM" id="MobiDB-lite"/>
    </source>
</evidence>
<evidence type="ECO:0000305" key="3"/>
<reference key="1">
    <citation type="journal article" date="2011" name="PLoS Genet.">
        <title>The evolution of host specialization in the vertebrate gut symbiont Lactobacillus reuteri.</title>
        <authorList>
            <person name="Frese S.A."/>
            <person name="Benson A.K."/>
            <person name="Tannock G.W."/>
            <person name="Loach D.M."/>
            <person name="Kim J."/>
            <person name="Zhang M."/>
            <person name="Oh P.L."/>
            <person name="Heng N.C."/>
            <person name="Patil P.B."/>
            <person name="Juge N."/>
            <person name="Mackenzie D.A."/>
            <person name="Pearson B.M."/>
            <person name="Lapidus A."/>
            <person name="Dalin E."/>
            <person name="Tice H."/>
            <person name="Goltsman E."/>
            <person name="Land M."/>
            <person name="Hauser L."/>
            <person name="Ivanova N."/>
            <person name="Kyrpides N.C."/>
            <person name="Walter J."/>
        </authorList>
    </citation>
    <scope>NUCLEOTIDE SEQUENCE [LARGE SCALE GENOMIC DNA]</scope>
    <source>
        <strain>DSM 20016</strain>
    </source>
</reference>
<gene>
    <name evidence="1" type="primary">rplP</name>
    <name type="ordered locus">Lreu_1476</name>
</gene>
<feature type="chain" id="PRO_1000067679" description="Large ribosomal subunit protein uL16">
    <location>
        <begin position="1"/>
        <end position="144"/>
    </location>
</feature>
<feature type="region of interest" description="Disordered" evidence="2">
    <location>
        <begin position="1"/>
        <end position="20"/>
    </location>
</feature>
<feature type="compositionally biased region" description="Basic residues" evidence="2">
    <location>
        <begin position="1"/>
        <end position="16"/>
    </location>
</feature>
<dbReference type="EMBL" id="CP000705">
    <property type="protein sequence ID" value="ABQ83722.1"/>
    <property type="molecule type" value="Genomic_DNA"/>
</dbReference>
<dbReference type="RefSeq" id="WP_003664555.1">
    <property type="nucleotide sequence ID" value="NZ_AZDD01000010.1"/>
</dbReference>
<dbReference type="SMR" id="A5VLJ8"/>
<dbReference type="STRING" id="557436.Lreu_1476"/>
<dbReference type="GeneID" id="78174250"/>
<dbReference type="KEGG" id="lre:Lreu_1476"/>
<dbReference type="PATRIC" id="fig|557436.17.peg.147"/>
<dbReference type="eggNOG" id="COG0197">
    <property type="taxonomic scope" value="Bacteria"/>
</dbReference>
<dbReference type="HOGENOM" id="CLU_078858_2_1_9"/>
<dbReference type="Proteomes" id="UP000001991">
    <property type="component" value="Chromosome"/>
</dbReference>
<dbReference type="GO" id="GO:0022625">
    <property type="term" value="C:cytosolic large ribosomal subunit"/>
    <property type="evidence" value="ECO:0007669"/>
    <property type="project" value="TreeGrafter"/>
</dbReference>
<dbReference type="GO" id="GO:0019843">
    <property type="term" value="F:rRNA binding"/>
    <property type="evidence" value="ECO:0007669"/>
    <property type="project" value="UniProtKB-UniRule"/>
</dbReference>
<dbReference type="GO" id="GO:0003735">
    <property type="term" value="F:structural constituent of ribosome"/>
    <property type="evidence" value="ECO:0007669"/>
    <property type="project" value="InterPro"/>
</dbReference>
<dbReference type="GO" id="GO:0000049">
    <property type="term" value="F:tRNA binding"/>
    <property type="evidence" value="ECO:0007669"/>
    <property type="project" value="UniProtKB-KW"/>
</dbReference>
<dbReference type="GO" id="GO:0006412">
    <property type="term" value="P:translation"/>
    <property type="evidence" value="ECO:0007669"/>
    <property type="project" value="UniProtKB-UniRule"/>
</dbReference>
<dbReference type="CDD" id="cd01433">
    <property type="entry name" value="Ribosomal_L16_L10e"/>
    <property type="match status" value="1"/>
</dbReference>
<dbReference type="FunFam" id="3.90.1170.10:FF:000001">
    <property type="entry name" value="50S ribosomal protein L16"/>
    <property type="match status" value="1"/>
</dbReference>
<dbReference type="Gene3D" id="3.90.1170.10">
    <property type="entry name" value="Ribosomal protein L10e/L16"/>
    <property type="match status" value="1"/>
</dbReference>
<dbReference type="HAMAP" id="MF_01342">
    <property type="entry name" value="Ribosomal_uL16"/>
    <property type="match status" value="1"/>
</dbReference>
<dbReference type="InterPro" id="IPR047873">
    <property type="entry name" value="Ribosomal_uL16"/>
</dbReference>
<dbReference type="InterPro" id="IPR000114">
    <property type="entry name" value="Ribosomal_uL16_bact-type"/>
</dbReference>
<dbReference type="InterPro" id="IPR020798">
    <property type="entry name" value="Ribosomal_uL16_CS"/>
</dbReference>
<dbReference type="InterPro" id="IPR016180">
    <property type="entry name" value="Ribosomal_uL16_dom"/>
</dbReference>
<dbReference type="InterPro" id="IPR036920">
    <property type="entry name" value="Ribosomal_uL16_sf"/>
</dbReference>
<dbReference type="NCBIfam" id="TIGR01164">
    <property type="entry name" value="rplP_bact"/>
    <property type="match status" value="1"/>
</dbReference>
<dbReference type="PANTHER" id="PTHR12220">
    <property type="entry name" value="50S/60S RIBOSOMAL PROTEIN L16"/>
    <property type="match status" value="1"/>
</dbReference>
<dbReference type="PANTHER" id="PTHR12220:SF13">
    <property type="entry name" value="LARGE RIBOSOMAL SUBUNIT PROTEIN UL16M"/>
    <property type="match status" value="1"/>
</dbReference>
<dbReference type="Pfam" id="PF00252">
    <property type="entry name" value="Ribosomal_L16"/>
    <property type="match status" value="1"/>
</dbReference>
<dbReference type="PRINTS" id="PR00060">
    <property type="entry name" value="RIBOSOMALL16"/>
</dbReference>
<dbReference type="SUPFAM" id="SSF54686">
    <property type="entry name" value="Ribosomal protein L16p/L10e"/>
    <property type="match status" value="1"/>
</dbReference>
<dbReference type="PROSITE" id="PS00586">
    <property type="entry name" value="RIBOSOMAL_L16_1"/>
    <property type="match status" value="1"/>
</dbReference>
<dbReference type="PROSITE" id="PS00701">
    <property type="entry name" value="RIBOSOMAL_L16_2"/>
    <property type="match status" value="1"/>
</dbReference>
<comment type="function">
    <text evidence="1">Binds 23S rRNA and is also seen to make contacts with the A and possibly P site tRNAs.</text>
</comment>
<comment type="subunit">
    <text evidence="1">Part of the 50S ribosomal subunit.</text>
</comment>
<comment type="similarity">
    <text evidence="1">Belongs to the universal ribosomal protein uL16 family.</text>
</comment>
<sequence>MLVPKRVKHRKVQRGHMRGEAKGGKTVTFGEFGLQALDSHWISNRQIEAARIAMTRYMKRGGKVWIKIFPQLSYTSKGVGVRMGNGKGAPEGWVAPVKRGKVMFEVGGVSEEVAREALRLAGHKLPVRTKIVQREEVGGQSNEK</sequence>
<protein>
    <recommendedName>
        <fullName evidence="1">Large ribosomal subunit protein uL16</fullName>
    </recommendedName>
    <alternativeName>
        <fullName evidence="3">50S ribosomal protein L16</fullName>
    </alternativeName>
</protein>
<accession>A5VLJ8</accession>
<proteinExistence type="inferred from homology"/>
<organism>
    <name type="scientific">Limosilactobacillus reuteri (strain DSM 20016)</name>
    <name type="common">Lactobacillus reuteri</name>
    <dbReference type="NCBI Taxonomy" id="557436"/>
    <lineage>
        <taxon>Bacteria</taxon>
        <taxon>Bacillati</taxon>
        <taxon>Bacillota</taxon>
        <taxon>Bacilli</taxon>
        <taxon>Lactobacillales</taxon>
        <taxon>Lactobacillaceae</taxon>
        <taxon>Limosilactobacillus</taxon>
    </lineage>
</organism>
<keyword id="KW-1185">Reference proteome</keyword>
<keyword id="KW-0687">Ribonucleoprotein</keyword>
<keyword id="KW-0689">Ribosomal protein</keyword>
<keyword id="KW-0694">RNA-binding</keyword>
<keyword id="KW-0699">rRNA-binding</keyword>
<keyword id="KW-0820">tRNA-binding</keyword>